<dbReference type="EMBL" id="AP007281">
    <property type="protein sequence ID" value="BAG25892.1"/>
    <property type="molecule type" value="Genomic_DNA"/>
</dbReference>
<dbReference type="RefSeq" id="WP_003664541.1">
    <property type="nucleotide sequence ID" value="NC_010609.1"/>
</dbReference>
<dbReference type="SMR" id="B2G8W0"/>
<dbReference type="GeneID" id="77191461"/>
<dbReference type="KEGG" id="lrf:LAR_1376"/>
<dbReference type="HOGENOM" id="CLU_131047_2_1_9"/>
<dbReference type="GO" id="GO:0022625">
    <property type="term" value="C:cytosolic large ribosomal subunit"/>
    <property type="evidence" value="ECO:0007669"/>
    <property type="project" value="TreeGrafter"/>
</dbReference>
<dbReference type="GO" id="GO:0003735">
    <property type="term" value="F:structural constituent of ribosome"/>
    <property type="evidence" value="ECO:0007669"/>
    <property type="project" value="InterPro"/>
</dbReference>
<dbReference type="GO" id="GO:0006412">
    <property type="term" value="P:translation"/>
    <property type="evidence" value="ECO:0007669"/>
    <property type="project" value="UniProtKB-UniRule"/>
</dbReference>
<dbReference type="CDD" id="cd01658">
    <property type="entry name" value="Ribosomal_L30"/>
    <property type="match status" value="1"/>
</dbReference>
<dbReference type="Gene3D" id="3.30.1390.20">
    <property type="entry name" value="Ribosomal protein L30, ferredoxin-like fold domain"/>
    <property type="match status" value="1"/>
</dbReference>
<dbReference type="HAMAP" id="MF_01371_B">
    <property type="entry name" value="Ribosomal_uL30_B"/>
    <property type="match status" value="1"/>
</dbReference>
<dbReference type="InterPro" id="IPR036919">
    <property type="entry name" value="Ribo_uL30_ferredoxin-like_sf"/>
</dbReference>
<dbReference type="InterPro" id="IPR005996">
    <property type="entry name" value="Ribosomal_uL30_bac-type"/>
</dbReference>
<dbReference type="InterPro" id="IPR016082">
    <property type="entry name" value="Ribosomal_uL30_ferredoxin-like"/>
</dbReference>
<dbReference type="NCBIfam" id="TIGR01308">
    <property type="entry name" value="rpmD_bact"/>
    <property type="match status" value="1"/>
</dbReference>
<dbReference type="PANTHER" id="PTHR15892:SF2">
    <property type="entry name" value="LARGE RIBOSOMAL SUBUNIT PROTEIN UL30M"/>
    <property type="match status" value="1"/>
</dbReference>
<dbReference type="PANTHER" id="PTHR15892">
    <property type="entry name" value="MITOCHONDRIAL RIBOSOMAL PROTEIN L30"/>
    <property type="match status" value="1"/>
</dbReference>
<dbReference type="Pfam" id="PF00327">
    <property type="entry name" value="Ribosomal_L30"/>
    <property type="match status" value="1"/>
</dbReference>
<dbReference type="PIRSF" id="PIRSF002211">
    <property type="entry name" value="Ribosomal_L30_bac-type"/>
    <property type="match status" value="1"/>
</dbReference>
<dbReference type="SUPFAM" id="SSF55129">
    <property type="entry name" value="Ribosomal protein L30p/L7e"/>
    <property type="match status" value="1"/>
</dbReference>
<feature type="chain" id="PRO_1000144694" description="Large ribosomal subunit protein uL30">
    <location>
        <begin position="1"/>
        <end position="60"/>
    </location>
</feature>
<accession>B2G8W0</accession>
<comment type="subunit">
    <text evidence="1">Part of the 50S ribosomal subunit.</text>
</comment>
<comment type="similarity">
    <text evidence="1">Belongs to the universal ribosomal protein uL30 family.</text>
</comment>
<gene>
    <name evidence="1" type="primary">rpmD</name>
    <name type="ordered locus">LAR_1376</name>
</gene>
<evidence type="ECO:0000255" key="1">
    <source>
        <dbReference type="HAMAP-Rule" id="MF_01371"/>
    </source>
</evidence>
<evidence type="ECO:0000305" key="2"/>
<sequence length="60" mass="6557">MAQVKVTLIHSVAHRQPTQRRTVKALGLGKINSSVILPDNAATRGQIFKIAHLVSVEEVK</sequence>
<proteinExistence type="inferred from homology"/>
<protein>
    <recommendedName>
        <fullName evidence="1">Large ribosomal subunit protein uL30</fullName>
    </recommendedName>
    <alternativeName>
        <fullName evidence="2">50S ribosomal protein L30</fullName>
    </alternativeName>
</protein>
<reference key="1">
    <citation type="journal article" date="2008" name="DNA Res.">
        <title>Comparative genome analysis of Lactobacillus reuteri and Lactobacillus fermentum reveal a genomic island for reuterin and cobalamin production.</title>
        <authorList>
            <person name="Morita H."/>
            <person name="Toh H."/>
            <person name="Fukuda S."/>
            <person name="Horikawa H."/>
            <person name="Oshima K."/>
            <person name="Suzuki T."/>
            <person name="Murakami M."/>
            <person name="Hisamatsu S."/>
            <person name="Kato Y."/>
            <person name="Takizawa T."/>
            <person name="Fukuoka H."/>
            <person name="Yoshimura T."/>
            <person name="Itoh K."/>
            <person name="O'Sullivan D.J."/>
            <person name="McKay L.L."/>
            <person name="Ohno H."/>
            <person name="Kikuchi J."/>
            <person name="Masaoka T."/>
            <person name="Hattori M."/>
        </authorList>
    </citation>
    <scope>NUCLEOTIDE SEQUENCE [LARGE SCALE GENOMIC DNA]</scope>
    <source>
        <strain>JCM 1112</strain>
    </source>
</reference>
<name>RL30_LIMRJ</name>
<keyword id="KW-0687">Ribonucleoprotein</keyword>
<keyword id="KW-0689">Ribosomal protein</keyword>
<organism>
    <name type="scientific">Limosilactobacillus reuteri subsp. reuteri (strain JCM 1112)</name>
    <name type="common">Lactobacillus reuteri</name>
    <dbReference type="NCBI Taxonomy" id="557433"/>
    <lineage>
        <taxon>Bacteria</taxon>
        <taxon>Bacillati</taxon>
        <taxon>Bacillota</taxon>
        <taxon>Bacilli</taxon>
        <taxon>Lactobacillales</taxon>
        <taxon>Lactobacillaceae</taxon>
        <taxon>Limosilactobacillus</taxon>
    </lineage>
</organism>